<organism>
    <name type="scientific">Porphyra purpurea</name>
    <name type="common">Red seaweed</name>
    <name type="synonym">Ulva purpurea</name>
    <dbReference type="NCBI Taxonomy" id="2787"/>
    <lineage>
        <taxon>Eukaryota</taxon>
        <taxon>Rhodophyta</taxon>
        <taxon>Bangiophyceae</taxon>
        <taxon>Bangiales</taxon>
        <taxon>Bangiaceae</taxon>
        <taxon>Porphyra</taxon>
    </lineage>
</organism>
<dbReference type="EMBL" id="U38804">
    <property type="protein sequence ID" value="AAC08217.1"/>
    <property type="molecule type" value="Genomic_DNA"/>
</dbReference>
<dbReference type="PIR" id="S73252">
    <property type="entry name" value="S73252"/>
</dbReference>
<dbReference type="RefSeq" id="NP_053941.1">
    <property type="nucleotide sequence ID" value="NC_000925.1"/>
</dbReference>
<dbReference type="SMR" id="P51331"/>
<dbReference type="GeneID" id="809965"/>
<dbReference type="GO" id="GO:0009507">
    <property type="term" value="C:chloroplast"/>
    <property type="evidence" value="ECO:0007669"/>
    <property type="project" value="UniProtKB-SubCell"/>
</dbReference>
<dbReference type="GO" id="GO:0005762">
    <property type="term" value="C:mitochondrial large ribosomal subunit"/>
    <property type="evidence" value="ECO:0007669"/>
    <property type="project" value="TreeGrafter"/>
</dbReference>
<dbReference type="GO" id="GO:0003735">
    <property type="term" value="F:structural constituent of ribosome"/>
    <property type="evidence" value="ECO:0007669"/>
    <property type="project" value="InterPro"/>
</dbReference>
<dbReference type="GO" id="GO:0006412">
    <property type="term" value="P:translation"/>
    <property type="evidence" value="ECO:0007669"/>
    <property type="project" value="UniProtKB-UniRule"/>
</dbReference>
<dbReference type="Gene3D" id="2.30.30.790">
    <property type="match status" value="1"/>
</dbReference>
<dbReference type="HAMAP" id="MF_00402">
    <property type="entry name" value="Ribosomal_bL19"/>
    <property type="match status" value="1"/>
</dbReference>
<dbReference type="InterPro" id="IPR001857">
    <property type="entry name" value="Ribosomal_bL19"/>
</dbReference>
<dbReference type="InterPro" id="IPR018257">
    <property type="entry name" value="Ribosomal_bL19_CS"/>
</dbReference>
<dbReference type="InterPro" id="IPR038657">
    <property type="entry name" value="Ribosomal_bL19_sf"/>
</dbReference>
<dbReference type="InterPro" id="IPR008991">
    <property type="entry name" value="Translation_prot_SH3-like_sf"/>
</dbReference>
<dbReference type="NCBIfam" id="TIGR01024">
    <property type="entry name" value="rplS_bact"/>
    <property type="match status" value="1"/>
</dbReference>
<dbReference type="PANTHER" id="PTHR15680:SF9">
    <property type="entry name" value="LARGE RIBOSOMAL SUBUNIT PROTEIN BL19M"/>
    <property type="match status" value="1"/>
</dbReference>
<dbReference type="PANTHER" id="PTHR15680">
    <property type="entry name" value="RIBOSOMAL PROTEIN L19"/>
    <property type="match status" value="1"/>
</dbReference>
<dbReference type="Pfam" id="PF01245">
    <property type="entry name" value="Ribosomal_L19"/>
    <property type="match status" value="1"/>
</dbReference>
<dbReference type="PIRSF" id="PIRSF002191">
    <property type="entry name" value="Ribosomal_L19"/>
    <property type="match status" value="1"/>
</dbReference>
<dbReference type="PRINTS" id="PR00061">
    <property type="entry name" value="RIBOSOMALL19"/>
</dbReference>
<dbReference type="SUPFAM" id="SSF50104">
    <property type="entry name" value="Translation proteins SH3-like domain"/>
    <property type="match status" value="1"/>
</dbReference>
<dbReference type="PROSITE" id="PS01015">
    <property type="entry name" value="RIBOSOMAL_L19"/>
    <property type="match status" value="1"/>
</dbReference>
<reference key="1">
    <citation type="journal article" date="1995" name="Plant Mol. Biol. Rep.">
        <title>Complete nucleotide sequence of the Porphyra purpurea chloroplast genome.</title>
        <authorList>
            <person name="Reith M.E."/>
            <person name="Munholland J."/>
        </authorList>
    </citation>
    <scope>NUCLEOTIDE SEQUENCE [LARGE SCALE GENOMIC DNA]</scope>
    <source>
        <strain>Avonport</strain>
    </source>
</reference>
<geneLocation type="chloroplast"/>
<comment type="subcellular location">
    <subcellularLocation>
        <location>Plastid</location>
        <location>Chloroplast</location>
    </subcellularLocation>
</comment>
<comment type="similarity">
    <text evidence="1">Belongs to the bacterial ribosomal protein bL19 family.</text>
</comment>
<feature type="chain" id="PRO_0000163587" description="Large ribosomal subunit protein bL19c">
    <location>
        <begin position="1"/>
        <end position="123"/>
    </location>
</feature>
<name>RK19_PORPU</name>
<keyword id="KW-0150">Chloroplast</keyword>
<keyword id="KW-0934">Plastid</keyword>
<keyword id="KW-0687">Ribonucleoprotein</keyword>
<keyword id="KW-0689">Ribosomal protein</keyword>
<evidence type="ECO:0000305" key="1"/>
<sequence>MKDNNIKLSLLMKSVEQPLMKTELPEIKVGDTIRLGLLVKEGSKTREQLCEGVVLSRKKRKSLNTSLTLRCSFQGVGVERVFFLNSPRVTFVKVIRRAKVRRAKLYYLRDLLGKASRLKQIFN</sequence>
<gene>
    <name type="primary">rpl19</name>
</gene>
<proteinExistence type="inferred from homology"/>
<accession>P51331</accession>
<protein>
    <recommendedName>
        <fullName evidence="1">Large ribosomal subunit protein bL19c</fullName>
    </recommendedName>
    <alternativeName>
        <fullName>50S ribosomal protein L19, chloroplastic</fullName>
    </alternativeName>
</protein>